<comment type="catalytic activity">
    <reaction evidence="1">
        <text>tRNA(Gln) + L-glutamine + ATP = L-glutaminyl-tRNA(Gln) + AMP + diphosphate</text>
        <dbReference type="Rhea" id="RHEA:20121"/>
        <dbReference type="Rhea" id="RHEA-COMP:9662"/>
        <dbReference type="Rhea" id="RHEA-COMP:9681"/>
        <dbReference type="ChEBI" id="CHEBI:30616"/>
        <dbReference type="ChEBI" id="CHEBI:33019"/>
        <dbReference type="ChEBI" id="CHEBI:58359"/>
        <dbReference type="ChEBI" id="CHEBI:78442"/>
        <dbReference type="ChEBI" id="CHEBI:78521"/>
        <dbReference type="ChEBI" id="CHEBI:456215"/>
        <dbReference type="EC" id="6.1.1.18"/>
    </reaction>
</comment>
<comment type="subunit">
    <text evidence="1">Monomer.</text>
</comment>
<comment type="subcellular location">
    <subcellularLocation>
        <location evidence="1">Cytoplasm</location>
    </subcellularLocation>
</comment>
<comment type="similarity">
    <text evidence="1">Belongs to the class-I aminoacyl-tRNA synthetase family.</text>
</comment>
<keyword id="KW-0030">Aminoacyl-tRNA synthetase</keyword>
<keyword id="KW-0067">ATP-binding</keyword>
<keyword id="KW-0963">Cytoplasm</keyword>
<keyword id="KW-0436">Ligase</keyword>
<keyword id="KW-0547">Nucleotide-binding</keyword>
<keyword id="KW-0648">Protein biosynthesis</keyword>
<keyword id="KW-1185">Reference proteome</keyword>
<accession>B2VBN3</accession>
<gene>
    <name evidence="1" type="primary">glnS</name>
    <name type="ordered locus">ETA_23290</name>
</gene>
<reference key="1">
    <citation type="journal article" date="2008" name="Environ. Microbiol.">
        <title>The genome of Erwinia tasmaniensis strain Et1/99, a non-pathogenic bacterium in the genus Erwinia.</title>
        <authorList>
            <person name="Kube M."/>
            <person name="Migdoll A.M."/>
            <person name="Mueller I."/>
            <person name="Kuhl H."/>
            <person name="Beck A."/>
            <person name="Reinhardt R."/>
            <person name="Geider K."/>
        </authorList>
    </citation>
    <scope>NUCLEOTIDE SEQUENCE [LARGE SCALE GENOMIC DNA]</scope>
    <source>
        <strain>DSM 17950 / CFBP 7177 / CIP 109463 / NCPPB 4357 / Et1/99</strain>
    </source>
</reference>
<name>SYQ_ERWT9</name>
<evidence type="ECO:0000255" key="1">
    <source>
        <dbReference type="HAMAP-Rule" id="MF_00126"/>
    </source>
</evidence>
<dbReference type="EC" id="6.1.1.18" evidence="1"/>
<dbReference type="EMBL" id="CU468135">
    <property type="protein sequence ID" value="CAO97375.1"/>
    <property type="molecule type" value="Genomic_DNA"/>
</dbReference>
<dbReference type="RefSeq" id="WP_012442044.1">
    <property type="nucleotide sequence ID" value="NC_010694.1"/>
</dbReference>
<dbReference type="SMR" id="B2VBN3"/>
<dbReference type="STRING" id="465817.ETA_23290"/>
<dbReference type="KEGG" id="eta:ETA_23290"/>
<dbReference type="eggNOG" id="COG0008">
    <property type="taxonomic scope" value="Bacteria"/>
</dbReference>
<dbReference type="HOGENOM" id="CLU_001882_2_3_6"/>
<dbReference type="OrthoDB" id="9801560at2"/>
<dbReference type="Proteomes" id="UP000001726">
    <property type="component" value="Chromosome"/>
</dbReference>
<dbReference type="GO" id="GO:0005829">
    <property type="term" value="C:cytosol"/>
    <property type="evidence" value="ECO:0007669"/>
    <property type="project" value="TreeGrafter"/>
</dbReference>
<dbReference type="GO" id="GO:0005524">
    <property type="term" value="F:ATP binding"/>
    <property type="evidence" value="ECO:0007669"/>
    <property type="project" value="UniProtKB-UniRule"/>
</dbReference>
<dbReference type="GO" id="GO:0004819">
    <property type="term" value="F:glutamine-tRNA ligase activity"/>
    <property type="evidence" value="ECO:0007669"/>
    <property type="project" value="UniProtKB-UniRule"/>
</dbReference>
<dbReference type="GO" id="GO:0006425">
    <property type="term" value="P:glutaminyl-tRNA aminoacylation"/>
    <property type="evidence" value="ECO:0007669"/>
    <property type="project" value="InterPro"/>
</dbReference>
<dbReference type="GO" id="GO:0006424">
    <property type="term" value="P:glutamyl-tRNA aminoacylation"/>
    <property type="evidence" value="ECO:0007669"/>
    <property type="project" value="UniProtKB-UniRule"/>
</dbReference>
<dbReference type="CDD" id="cd00807">
    <property type="entry name" value="GlnRS_core"/>
    <property type="match status" value="1"/>
</dbReference>
<dbReference type="FunFam" id="1.10.1160.10:FF:000001">
    <property type="entry name" value="Glutamine--tRNA ligase"/>
    <property type="match status" value="1"/>
</dbReference>
<dbReference type="FunFam" id="2.40.240.10:FF:000001">
    <property type="entry name" value="Glutamine--tRNA ligase"/>
    <property type="match status" value="1"/>
</dbReference>
<dbReference type="FunFam" id="2.40.240.10:FF:000003">
    <property type="entry name" value="Glutamine--tRNA ligase"/>
    <property type="match status" value="1"/>
</dbReference>
<dbReference type="FunFam" id="3.90.800.10:FF:000001">
    <property type="entry name" value="Glutamine--tRNA ligase"/>
    <property type="match status" value="1"/>
</dbReference>
<dbReference type="FunFam" id="3.40.50.620:FF:000037">
    <property type="entry name" value="Glutamine--tRNA ligase cytoplasmic"/>
    <property type="match status" value="1"/>
</dbReference>
<dbReference type="Gene3D" id="1.10.1160.10">
    <property type="entry name" value="Glutamyl-trna Synthetase, Domain 2"/>
    <property type="match status" value="1"/>
</dbReference>
<dbReference type="Gene3D" id="3.90.800.10">
    <property type="entry name" value="Glutamyl-tRNA Synthetase, Domain 3"/>
    <property type="match status" value="1"/>
</dbReference>
<dbReference type="Gene3D" id="3.40.50.620">
    <property type="entry name" value="HUPs"/>
    <property type="match status" value="1"/>
</dbReference>
<dbReference type="Gene3D" id="2.40.240.10">
    <property type="entry name" value="Ribosomal Protein L25, Chain P"/>
    <property type="match status" value="2"/>
</dbReference>
<dbReference type="HAMAP" id="MF_00126">
    <property type="entry name" value="Gln_tRNA_synth"/>
    <property type="match status" value="1"/>
</dbReference>
<dbReference type="InterPro" id="IPR001412">
    <property type="entry name" value="aa-tRNA-synth_I_CS"/>
</dbReference>
<dbReference type="InterPro" id="IPR004514">
    <property type="entry name" value="Gln-tRNA-synth"/>
</dbReference>
<dbReference type="InterPro" id="IPR050132">
    <property type="entry name" value="Gln/Glu-tRNA_Ligase"/>
</dbReference>
<dbReference type="InterPro" id="IPR022861">
    <property type="entry name" value="Gln_tRNA_ligase_bac"/>
</dbReference>
<dbReference type="InterPro" id="IPR000924">
    <property type="entry name" value="Glu/Gln-tRNA-synth"/>
</dbReference>
<dbReference type="InterPro" id="IPR020058">
    <property type="entry name" value="Glu/Gln-tRNA-synth_Ib_cat-dom"/>
</dbReference>
<dbReference type="InterPro" id="IPR020059">
    <property type="entry name" value="Glu/Gln-tRNA-synth_Ib_codon-bd"/>
</dbReference>
<dbReference type="InterPro" id="IPR020061">
    <property type="entry name" value="Glu_tRNA_lig_a-bdl"/>
</dbReference>
<dbReference type="InterPro" id="IPR020056">
    <property type="entry name" value="Rbsml_bL25/Gln-tRNA_synth_N"/>
</dbReference>
<dbReference type="InterPro" id="IPR011035">
    <property type="entry name" value="Ribosomal_bL25/Gln-tRNA_synth"/>
</dbReference>
<dbReference type="InterPro" id="IPR014729">
    <property type="entry name" value="Rossmann-like_a/b/a_fold"/>
</dbReference>
<dbReference type="InterPro" id="IPR049437">
    <property type="entry name" value="tRNA-synt_1c_C2"/>
</dbReference>
<dbReference type="NCBIfam" id="TIGR00440">
    <property type="entry name" value="glnS"/>
    <property type="match status" value="1"/>
</dbReference>
<dbReference type="NCBIfam" id="NF011291">
    <property type="entry name" value="PRK14703.1"/>
    <property type="match status" value="1"/>
</dbReference>
<dbReference type="PANTHER" id="PTHR43097:SF5">
    <property type="entry name" value="GLUTAMATE--TRNA LIGASE"/>
    <property type="match status" value="1"/>
</dbReference>
<dbReference type="PANTHER" id="PTHR43097">
    <property type="entry name" value="GLUTAMINE-TRNA LIGASE"/>
    <property type="match status" value="1"/>
</dbReference>
<dbReference type="Pfam" id="PF00749">
    <property type="entry name" value="tRNA-synt_1c"/>
    <property type="match status" value="1"/>
</dbReference>
<dbReference type="Pfam" id="PF03950">
    <property type="entry name" value="tRNA-synt_1c_C"/>
    <property type="match status" value="1"/>
</dbReference>
<dbReference type="Pfam" id="PF20974">
    <property type="entry name" value="tRNA-synt_1c_C2"/>
    <property type="match status" value="1"/>
</dbReference>
<dbReference type="PRINTS" id="PR00987">
    <property type="entry name" value="TRNASYNTHGLU"/>
</dbReference>
<dbReference type="SUPFAM" id="SSF52374">
    <property type="entry name" value="Nucleotidylyl transferase"/>
    <property type="match status" value="1"/>
</dbReference>
<dbReference type="SUPFAM" id="SSF50715">
    <property type="entry name" value="Ribosomal protein L25-like"/>
    <property type="match status" value="1"/>
</dbReference>
<dbReference type="PROSITE" id="PS00178">
    <property type="entry name" value="AA_TRNA_LIGASE_I"/>
    <property type="match status" value="1"/>
</dbReference>
<sequence>MSEAEARPTNFIRQIIDEDLENGKHSMVHTRFPPEPNGYLHIGHAKSICLNFGIAQDYKGQCNLRFDDTNPVKEDLEFVESIKRDVQWLGFQWSGEVRYSSDYFEQLHNYAVELIGKGLAYVDELSPEQIREYRGSLTSAGKNSPYRDRSVAENLELFAKMRNGEFAEGTACLRAKIDMASNFIVLRDPVIYRIKFADHHQTGNRWCIYPMYDFTHCISDALEGITHSLCTLEFQDNRRLYDWVLDNITIPVHPRQYEFSRLNLEYAIMSKRKLNLLVTEKVVEGWDDPRMLTVSGLRRRGYSAGSIREFCRRIGVTKQDNIVEMAALESCIRDDLNENAPRAMAVLDAVKVVIENLPAHHEQTICMPNHPNRPEMGTRQVPFSREIYIDRADFREEANKHYKRLVLGKEVRLRNAYVIKAERIAKDEEGNITCLFCSCDIDTLSKDPADGRKVKGVIHWVSAEHALLAEFRLYDRLFSVPNPAAAEDFLTTINPESLVIRQGFVEPGMQQALASAPYQFEREGYFCADSVYSTSNKLVFNRTVGLRDTWAKNGE</sequence>
<organism>
    <name type="scientific">Erwinia tasmaniensis (strain DSM 17950 / CFBP 7177 / CIP 109463 / NCPPB 4357 / Et1/99)</name>
    <dbReference type="NCBI Taxonomy" id="465817"/>
    <lineage>
        <taxon>Bacteria</taxon>
        <taxon>Pseudomonadati</taxon>
        <taxon>Pseudomonadota</taxon>
        <taxon>Gammaproteobacteria</taxon>
        <taxon>Enterobacterales</taxon>
        <taxon>Erwiniaceae</taxon>
        <taxon>Erwinia</taxon>
    </lineage>
</organism>
<protein>
    <recommendedName>
        <fullName evidence="1">Glutamine--tRNA ligase</fullName>
        <ecNumber evidence="1">6.1.1.18</ecNumber>
    </recommendedName>
    <alternativeName>
        <fullName evidence="1">Glutaminyl-tRNA synthetase</fullName>
        <shortName evidence="1">GlnRS</shortName>
    </alternativeName>
</protein>
<feature type="chain" id="PRO_1000095491" description="Glutamine--tRNA ligase">
    <location>
        <begin position="1"/>
        <end position="555"/>
    </location>
</feature>
<feature type="short sequence motif" description="'HIGH' region" evidence="1">
    <location>
        <begin position="34"/>
        <end position="44"/>
    </location>
</feature>
<feature type="short sequence motif" description="'KMSKS' region" evidence="1">
    <location>
        <begin position="268"/>
        <end position="272"/>
    </location>
</feature>
<feature type="binding site" evidence="1">
    <location>
        <begin position="35"/>
        <end position="37"/>
    </location>
    <ligand>
        <name>ATP</name>
        <dbReference type="ChEBI" id="CHEBI:30616"/>
    </ligand>
</feature>
<feature type="binding site" evidence="1">
    <location>
        <begin position="41"/>
        <end position="47"/>
    </location>
    <ligand>
        <name>ATP</name>
        <dbReference type="ChEBI" id="CHEBI:30616"/>
    </ligand>
</feature>
<feature type="binding site" evidence="1">
    <location>
        <position position="67"/>
    </location>
    <ligand>
        <name>L-glutamine</name>
        <dbReference type="ChEBI" id="CHEBI:58359"/>
    </ligand>
</feature>
<feature type="binding site" evidence="1">
    <location>
        <position position="212"/>
    </location>
    <ligand>
        <name>L-glutamine</name>
        <dbReference type="ChEBI" id="CHEBI:58359"/>
    </ligand>
</feature>
<feature type="binding site" evidence="1">
    <location>
        <position position="231"/>
    </location>
    <ligand>
        <name>ATP</name>
        <dbReference type="ChEBI" id="CHEBI:30616"/>
    </ligand>
</feature>
<feature type="binding site" evidence="1">
    <location>
        <begin position="261"/>
        <end position="262"/>
    </location>
    <ligand>
        <name>ATP</name>
        <dbReference type="ChEBI" id="CHEBI:30616"/>
    </ligand>
</feature>
<feature type="binding site" evidence="1">
    <location>
        <begin position="269"/>
        <end position="271"/>
    </location>
    <ligand>
        <name>ATP</name>
        <dbReference type="ChEBI" id="CHEBI:30616"/>
    </ligand>
</feature>
<proteinExistence type="inferred from homology"/>